<keyword id="KW-0342">GTP-binding</keyword>
<keyword id="KW-0547">Nucleotide-binding</keyword>
<keyword id="KW-0539">Nucleus</keyword>
<keyword id="KW-0653">Protein transport</keyword>
<keyword id="KW-1185">Reference proteome</keyword>
<keyword id="KW-0813">Transport</keyword>
<organism>
    <name type="scientific">Oryza sativa subsp. japonica</name>
    <name type="common">Rice</name>
    <dbReference type="NCBI Taxonomy" id="39947"/>
    <lineage>
        <taxon>Eukaryota</taxon>
        <taxon>Viridiplantae</taxon>
        <taxon>Streptophyta</taxon>
        <taxon>Embryophyta</taxon>
        <taxon>Tracheophyta</taxon>
        <taxon>Spermatophyta</taxon>
        <taxon>Magnoliopsida</taxon>
        <taxon>Liliopsida</taxon>
        <taxon>Poales</taxon>
        <taxon>Poaceae</taxon>
        <taxon>BOP clade</taxon>
        <taxon>Oryzoideae</taxon>
        <taxon>Oryzeae</taxon>
        <taxon>Oryzinae</taxon>
        <taxon>Oryza</taxon>
        <taxon>Oryza sativa</taxon>
    </lineage>
</organism>
<feature type="chain" id="PRO_0000347212" description="GTP-binding nuclear protein Ran-3">
    <location>
        <begin position="1"/>
        <end position="226"/>
    </location>
</feature>
<feature type="domain" description="Small GTPase Ran-type" evidence="3">
    <location>
        <begin position="14"/>
        <end position="178"/>
    </location>
</feature>
<feature type="region of interest" description="Switch-I" evidence="3">
    <location>
        <begin position="44"/>
        <end position="52"/>
    </location>
</feature>
<feature type="region of interest" description="Switch-II" evidence="3">
    <location>
        <begin position="75"/>
        <end position="91"/>
    </location>
</feature>
<feature type="binding site" evidence="2">
    <location>
        <begin position="25"/>
        <end position="32"/>
    </location>
    <ligand>
        <name>GTP</name>
        <dbReference type="ChEBI" id="CHEBI:37565"/>
    </ligand>
</feature>
<feature type="binding site" evidence="2">
    <location>
        <position position="75"/>
    </location>
    <ligand>
        <name>GTP</name>
        <dbReference type="ChEBI" id="CHEBI:37565"/>
    </ligand>
</feature>
<feature type="binding site" evidence="2">
    <location>
        <begin position="129"/>
        <end position="132"/>
    </location>
    <ligand>
        <name>GTP</name>
        <dbReference type="ChEBI" id="CHEBI:37565"/>
    </ligand>
</feature>
<feature type="binding site" evidence="2">
    <location>
        <begin position="157"/>
        <end position="159"/>
    </location>
    <ligand>
        <name>GTP</name>
        <dbReference type="ChEBI" id="CHEBI:37565"/>
    </ligand>
</feature>
<evidence type="ECO:0000250" key="1"/>
<evidence type="ECO:0000250" key="2">
    <source>
        <dbReference type="UniProtKB" id="P62825"/>
    </source>
</evidence>
<evidence type="ECO:0000255" key="3">
    <source>
        <dbReference type="PROSITE-ProRule" id="PRU00752"/>
    </source>
</evidence>
<evidence type="ECO:0000305" key="4"/>
<sequence length="226" mass="25613">MSRAQALPDPAAVGYPSFKLILVGDGGTGKTTFVKRHITGEFEKRYEPTIGVEVRPLDFHTSRGKVRFCCWDTAGQEKFGGLRDGYYIHGHCAIIMFDVTSRLTYKNVPTWHKDICRVCDNIPIVLCGNKVDMKNRQVKAKMVTFHRKKNLQYYEISAKSNYNFEKPFLYLARKLTGDMNLRFVEELALLPADVTIDLIAQQKIETEIAAAAAMPLPDEDEDGLMD</sequence>
<dbReference type="EMBL" id="AP003612">
    <property type="protein sequence ID" value="BAD32834.1"/>
    <property type="molecule type" value="Genomic_DNA"/>
</dbReference>
<dbReference type="EMBL" id="AP008212">
    <property type="protein sequence ID" value="BAH93613.1"/>
    <property type="molecule type" value="Genomic_DNA"/>
</dbReference>
<dbReference type="EMBL" id="AP014962">
    <property type="protein sequence ID" value="BAS98489.1"/>
    <property type="molecule type" value="Genomic_DNA"/>
</dbReference>
<dbReference type="EMBL" id="CM000143">
    <property type="status" value="NOT_ANNOTATED_CDS"/>
    <property type="molecule type" value="Genomic_DNA"/>
</dbReference>
<dbReference type="SMR" id="Q69XM7"/>
<dbReference type="FunCoup" id="Q69XM7">
    <property type="interactions" value="2610"/>
</dbReference>
<dbReference type="STRING" id="39947.Q69XM7"/>
<dbReference type="PaxDb" id="39947-Q69XM7"/>
<dbReference type="EnsemblPlants" id="Os06t0600301-00">
    <property type="protein sequence ID" value="Os06t0600301-00"/>
    <property type="gene ID" value="Os06g0600301"/>
</dbReference>
<dbReference type="Gramene" id="Os06t0600301-00">
    <property type="protein sequence ID" value="Os06t0600301-00"/>
    <property type="gene ID" value="Os06g0600301"/>
</dbReference>
<dbReference type="KEGG" id="dosa:Os06g0600301"/>
<dbReference type="eggNOG" id="KOG0096">
    <property type="taxonomic scope" value="Eukaryota"/>
</dbReference>
<dbReference type="HOGENOM" id="CLU_041217_13_0_1"/>
<dbReference type="InParanoid" id="Q69XM7"/>
<dbReference type="OMA" id="WILRTKV"/>
<dbReference type="Proteomes" id="UP000000763">
    <property type="component" value="Chromosome 6"/>
</dbReference>
<dbReference type="Proteomes" id="UP000007752">
    <property type="component" value="Chromosome 6"/>
</dbReference>
<dbReference type="Proteomes" id="UP000059680">
    <property type="component" value="Chromosome 6"/>
</dbReference>
<dbReference type="GO" id="GO:0005737">
    <property type="term" value="C:cytoplasm"/>
    <property type="evidence" value="ECO:0000318"/>
    <property type="project" value="GO_Central"/>
</dbReference>
<dbReference type="GO" id="GO:0005634">
    <property type="term" value="C:nucleus"/>
    <property type="evidence" value="ECO:0000318"/>
    <property type="project" value="GO_Central"/>
</dbReference>
<dbReference type="GO" id="GO:0005525">
    <property type="term" value="F:GTP binding"/>
    <property type="evidence" value="ECO:0007669"/>
    <property type="project" value="UniProtKB-KW"/>
</dbReference>
<dbReference type="GO" id="GO:0003924">
    <property type="term" value="F:GTPase activity"/>
    <property type="evidence" value="ECO:0000318"/>
    <property type="project" value="GO_Central"/>
</dbReference>
<dbReference type="GO" id="GO:0006606">
    <property type="term" value="P:protein import into nucleus"/>
    <property type="evidence" value="ECO:0000318"/>
    <property type="project" value="GO_Central"/>
</dbReference>
<dbReference type="GO" id="GO:0000054">
    <property type="term" value="P:ribosomal subunit export from nucleus"/>
    <property type="evidence" value="ECO:0000318"/>
    <property type="project" value="GO_Central"/>
</dbReference>
<dbReference type="CDD" id="cd00877">
    <property type="entry name" value="Ran"/>
    <property type="match status" value="1"/>
</dbReference>
<dbReference type="FunFam" id="3.40.50.300:FF:000369">
    <property type="entry name" value="GTP-binding nuclear protein"/>
    <property type="match status" value="1"/>
</dbReference>
<dbReference type="Gene3D" id="3.40.50.300">
    <property type="entry name" value="P-loop containing nucleotide triphosphate hydrolases"/>
    <property type="match status" value="1"/>
</dbReference>
<dbReference type="InterPro" id="IPR027417">
    <property type="entry name" value="P-loop_NTPase"/>
</dbReference>
<dbReference type="InterPro" id="IPR002041">
    <property type="entry name" value="Ran_GTPase"/>
</dbReference>
<dbReference type="InterPro" id="IPR005225">
    <property type="entry name" value="Small_GTP-bd"/>
</dbReference>
<dbReference type="InterPro" id="IPR001806">
    <property type="entry name" value="Small_GTPase"/>
</dbReference>
<dbReference type="NCBIfam" id="TIGR00231">
    <property type="entry name" value="small_GTP"/>
    <property type="match status" value="1"/>
</dbReference>
<dbReference type="PANTHER" id="PTHR24071:SF18">
    <property type="entry name" value="GTP-BINDING NUCLEAR PROTEIN RAN-3"/>
    <property type="match status" value="1"/>
</dbReference>
<dbReference type="PANTHER" id="PTHR24071">
    <property type="entry name" value="RAN GTPASE"/>
    <property type="match status" value="1"/>
</dbReference>
<dbReference type="Pfam" id="PF00071">
    <property type="entry name" value="Ras"/>
    <property type="match status" value="1"/>
</dbReference>
<dbReference type="PRINTS" id="PR00627">
    <property type="entry name" value="GTPRANTC4"/>
</dbReference>
<dbReference type="SMART" id="SM00175">
    <property type="entry name" value="RAB"/>
    <property type="match status" value="1"/>
</dbReference>
<dbReference type="SMART" id="SM00176">
    <property type="entry name" value="RAN"/>
    <property type="match status" value="1"/>
</dbReference>
<dbReference type="SMART" id="SM00173">
    <property type="entry name" value="RAS"/>
    <property type="match status" value="1"/>
</dbReference>
<dbReference type="SMART" id="SM00174">
    <property type="entry name" value="RHO"/>
    <property type="match status" value="1"/>
</dbReference>
<dbReference type="SUPFAM" id="SSF52540">
    <property type="entry name" value="P-loop containing nucleoside triphosphate hydrolases"/>
    <property type="match status" value="1"/>
</dbReference>
<dbReference type="PROSITE" id="PS51418">
    <property type="entry name" value="RAN"/>
    <property type="match status" value="1"/>
</dbReference>
<gene>
    <name type="primary">RAN3</name>
    <name type="ordered locus">Os06g0600301</name>
    <name type="ordered locus">LOC_Os06g39875</name>
    <name type="ORF">OsJ_021038</name>
    <name type="ORF">P0457B11.6</name>
</gene>
<protein>
    <recommendedName>
        <fullName>GTP-binding nuclear protein Ran-3</fullName>
        <shortName>OsRan3</shortName>
    </recommendedName>
    <alternativeName>
        <fullName>Ras-related nuclear protein 3</fullName>
    </alternativeName>
</protein>
<comment type="function">
    <text evidence="1">GTP-binding protein involved in nucleocytoplasmic transport. Required for the import of protein into the nucleus and also for RNA export. Involved in chromatin condensation and control of cell cycle (By similarity).</text>
</comment>
<comment type="subunit">
    <text evidence="2">Found in a nuclear export complex with RanGTP, exportin and pre-miRNA (By similarity).</text>
</comment>
<comment type="subcellular location">
    <subcellularLocation>
        <location evidence="1">Nucleus</location>
    </subcellularLocation>
</comment>
<comment type="similarity">
    <text evidence="3 4">Belongs to the small GTPase superfamily. Ran family.</text>
</comment>
<comment type="sequence caution" evidence="4">
    <conflict type="frameshift">
        <sequence resource="EMBL" id="CM000143"/>
    </conflict>
</comment>
<name>RAN3_ORYSJ</name>
<proteinExistence type="evidence at transcript level"/>
<reference key="1">
    <citation type="journal article" date="2005" name="Nature">
        <title>The map-based sequence of the rice genome.</title>
        <authorList>
            <consortium name="International rice genome sequencing project (IRGSP)"/>
        </authorList>
    </citation>
    <scope>NUCLEOTIDE SEQUENCE [LARGE SCALE GENOMIC DNA]</scope>
    <source>
        <strain>cv. Nipponbare</strain>
    </source>
</reference>
<reference key="2">
    <citation type="journal article" date="2008" name="Nucleic Acids Res.">
        <title>The rice annotation project database (RAP-DB): 2008 update.</title>
        <authorList>
            <consortium name="The rice annotation project (RAP)"/>
        </authorList>
    </citation>
    <scope>GENOME REANNOTATION</scope>
    <source>
        <strain>cv. Nipponbare</strain>
    </source>
</reference>
<reference key="3">
    <citation type="journal article" date="2013" name="Rice">
        <title>Improvement of the Oryza sativa Nipponbare reference genome using next generation sequence and optical map data.</title>
        <authorList>
            <person name="Kawahara Y."/>
            <person name="de la Bastide M."/>
            <person name="Hamilton J.P."/>
            <person name="Kanamori H."/>
            <person name="McCombie W.R."/>
            <person name="Ouyang S."/>
            <person name="Schwartz D.C."/>
            <person name="Tanaka T."/>
            <person name="Wu J."/>
            <person name="Zhou S."/>
            <person name="Childs K.L."/>
            <person name="Davidson R.M."/>
            <person name="Lin H."/>
            <person name="Quesada-Ocampo L."/>
            <person name="Vaillancourt B."/>
            <person name="Sakai H."/>
            <person name="Lee S.S."/>
            <person name="Kim J."/>
            <person name="Numa H."/>
            <person name="Itoh T."/>
            <person name="Buell C.R."/>
            <person name="Matsumoto T."/>
        </authorList>
    </citation>
    <scope>GENOME REANNOTATION</scope>
    <source>
        <strain>cv. Nipponbare</strain>
    </source>
</reference>
<reference key="4">
    <citation type="journal article" date="2005" name="PLoS Biol.">
        <title>The genomes of Oryza sativa: a history of duplications.</title>
        <authorList>
            <person name="Yu J."/>
            <person name="Wang J."/>
            <person name="Lin W."/>
            <person name="Li S."/>
            <person name="Li H."/>
            <person name="Zhou J."/>
            <person name="Ni P."/>
            <person name="Dong W."/>
            <person name="Hu S."/>
            <person name="Zeng C."/>
            <person name="Zhang J."/>
            <person name="Zhang Y."/>
            <person name="Li R."/>
            <person name="Xu Z."/>
            <person name="Li S."/>
            <person name="Li X."/>
            <person name="Zheng H."/>
            <person name="Cong L."/>
            <person name="Lin L."/>
            <person name="Yin J."/>
            <person name="Geng J."/>
            <person name="Li G."/>
            <person name="Shi J."/>
            <person name="Liu J."/>
            <person name="Lv H."/>
            <person name="Li J."/>
            <person name="Wang J."/>
            <person name="Deng Y."/>
            <person name="Ran L."/>
            <person name="Shi X."/>
            <person name="Wang X."/>
            <person name="Wu Q."/>
            <person name="Li C."/>
            <person name="Ren X."/>
            <person name="Wang J."/>
            <person name="Wang X."/>
            <person name="Li D."/>
            <person name="Liu D."/>
            <person name="Zhang X."/>
            <person name="Ji Z."/>
            <person name="Zhao W."/>
            <person name="Sun Y."/>
            <person name="Zhang Z."/>
            <person name="Bao J."/>
            <person name="Han Y."/>
            <person name="Dong L."/>
            <person name="Ji J."/>
            <person name="Chen P."/>
            <person name="Wu S."/>
            <person name="Liu J."/>
            <person name="Xiao Y."/>
            <person name="Bu D."/>
            <person name="Tan J."/>
            <person name="Yang L."/>
            <person name="Ye C."/>
            <person name="Zhang J."/>
            <person name="Xu J."/>
            <person name="Zhou Y."/>
            <person name="Yu Y."/>
            <person name="Zhang B."/>
            <person name="Zhuang S."/>
            <person name="Wei H."/>
            <person name="Liu B."/>
            <person name="Lei M."/>
            <person name="Yu H."/>
            <person name="Li Y."/>
            <person name="Xu H."/>
            <person name="Wei S."/>
            <person name="He X."/>
            <person name="Fang L."/>
            <person name="Zhang Z."/>
            <person name="Zhang Y."/>
            <person name="Huang X."/>
            <person name="Su Z."/>
            <person name="Tong W."/>
            <person name="Li J."/>
            <person name="Tong Z."/>
            <person name="Li S."/>
            <person name="Ye J."/>
            <person name="Wang L."/>
            <person name="Fang L."/>
            <person name="Lei T."/>
            <person name="Chen C.-S."/>
            <person name="Chen H.-C."/>
            <person name="Xu Z."/>
            <person name="Li H."/>
            <person name="Huang H."/>
            <person name="Zhang F."/>
            <person name="Xu H."/>
            <person name="Li N."/>
            <person name="Zhao C."/>
            <person name="Li S."/>
            <person name="Dong L."/>
            <person name="Huang Y."/>
            <person name="Li L."/>
            <person name="Xi Y."/>
            <person name="Qi Q."/>
            <person name="Li W."/>
            <person name="Zhang B."/>
            <person name="Hu W."/>
            <person name="Zhang Y."/>
            <person name="Tian X."/>
            <person name="Jiao Y."/>
            <person name="Liang X."/>
            <person name="Jin J."/>
            <person name="Gao L."/>
            <person name="Zheng W."/>
            <person name="Hao B."/>
            <person name="Liu S.-M."/>
            <person name="Wang W."/>
            <person name="Yuan L."/>
            <person name="Cao M."/>
            <person name="McDermott J."/>
            <person name="Samudrala R."/>
            <person name="Wang J."/>
            <person name="Wong G.K.-S."/>
            <person name="Yang H."/>
        </authorList>
    </citation>
    <scope>NUCLEOTIDE SEQUENCE [LARGE SCALE GENOMIC DNA]</scope>
    <source>
        <strain>cv. Nipponbare</strain>
    </source>
</reference>
<accession>Q69XM7</accession>
<accession>A3BDB6</accession>
<accession>C7J354</accession>